<proteinExistence type="inferred from homology"/>
<dbReference type="EMBL" id="CP000826">
    <property type="protein sequence ID" value="ABV40859.1"/>
    <property type="molecule type" value="Genomic_DNA"/>
</dbReference>
<dbReference type="SMR" id="A8GCL9"/>
<dbReference type="STRING" id="399741.Spro_1755"/>
<dbReference type="KEGG" id="spe:Spro_1755"/>
<dbReference type="eggNOG" id="COG5404">
    <property type="taxonomic scope" value="Bacteria"/>
</dbReference>
<dbReference type="HOGENOM" id="CLU_118972_1_0_6"/>
<dbReference type="OrthoDB" id="6464784at2"/>
<dbReference type="GO" id="GO:0000917">
    <property type="term" value="P:division septum assembly"/>
    <property type="evidence" value="ECO:0007669"/>
    <property type="project" value="UniProtKB-KW"/>
</dbReference>
<dbReference type="GO" id="GO:0006281">
    <property type="term" value="P:DNA repair"/>
    <property type="evidence" value="ECO:0007669"/>
    <property type="project" value="TreeGrafter"/>
</dbReference>
<dbReference type="GO" id="GO:0051782">
    <property type="term" value="P:negative regulation of cell division"/>
    <property type="evidence" value="ECO:0007669"/>
    <property type="project" value="UniProtKB-UniRule"/>
</dbReference>
<dbReference type="GO" id="GO:0009432">
    <property type="term" value="P:SOS response"/>
    <property type="evidence" value="ECO:0007669"/>
    <property type="project" value="UniProtKB-UniRule"/>
</dbReference>
<dbReference type="Gene3D" id="3.40.50.300">
    <property type="entry name" value="P-loop containing nucleotide triphosphate hydrolases"/>
    <property type="match status" value="1"/>
</dbReference>
<dbReference type="HAMAP" id="MF_01179">
    <property type="entry name" value="SulA"/>
    <property type="match status" value="1"/>
</dbReference>
<dbReference type="InterPro" id="IPR004596">
    <property type="entry name" value="Cell_div_suppressor_SulA"/>
</dbReference>
<dbReference type="InterPro" id="IPR027417">
    <property type="entry name" value="P-loop_NTPase"/>
</dbReference>
<dbReference type="InterPro" id="IPR050356">
    <property type="entry name" value="SulA_CellDiv_inhibitor"/>
</dbReference>
<dbReference type="InterPro" id="IPR047696">
    <property type="entry name" value="SulA_enterobact"/>
</dbReference>
<dbReference type="NCBIfam" id="NF007892">
    <property type="entry name" value="PRK10595.1"/>
    <property type="match status" value="1"/>
</dbReference>
<dbReference type="NCBIfam" id="TIGR00623">
    <property type="entry name" value="SOS_SulA_coli"/>
    <property type="match status" value="1"/>
</dbReference>
<dbReference type="PANTHER" id="PTHR35369">
    <property type="entry name" value="BLR3025 PROTEIN-RELATED"/>
    <property type="match status" value="1"/>
</dbReference>
<dbReference type="PANTHER" id="PTHR35369:SF4">
    <property type="entry name" value="CELL DIVISION INHIBITOR SULA"/>
    <property type="match status" value="1"/>
</dbReference>
<dbReference type="Pfam" id="PF03846">
    <property type="entry name" value="SulA"/>
    <property type="match status" value="1"/>
</dbReference>
<dbReference type="PIRSF" id="PIRSF003093">
    <property type="entry name" value="SulA"/>
    <property type="match status" value="1"/>
</dbReference>
<dbReference type="SUPFAM" id="SSF52540">
    <property type="entry name" value="P-loop containing nucleoside triphosphate hydrolases"/>
    <property type="match status" value="1"/>
</dbReference>
<gene>
    <name evidence="1" type="primary">sulA</name>
    <name type="ordered locus">Spro_1755</name>
</gene>
<keyword id="KW-0131">Cell cycle</keyword>
<keyword id="KW-0132">Cell division</keyword>
<keyword id="KW-0227">DNA damage</keyword>
<keyword id="KW-0717">Septation</keyword>
<keyword id="KW-0742">SOS response</keyword>
<name>SULA_SERP5</name>
<reference key="1">
    <citation type="submission" date="2007-09" db="EMBL/GenBank/DDBJ databases">
        <title>Complete sequence of chromosome of Serratia proteamaculans 568.</title>
        <authorList>
            <consortium name="US DOE Joint Genome Institute"/>
            <person name="Copeland A."/>
            <person name="Lucas S."/>
            <person name="Lapidus A."/>
            <person name="Barry K."/>
            <person name="Glavina del Rio T."/>
            <person name="Dalin E."/>
            <person name="Tice H."/>
            <person name="Pitluck S."/>
            <person name="Chain P."/>
            <person name="Malfatti S."/>
            <person name="Shin M."/>
            <person name="Vergez L."/>
            <person name="Schmutz J."/>
            <person name="Larimer F."/>
            <person name="Land M."/>
            <person name="Hauser L."/>
            <person name="Kyrpides N."/>
            <person name="Kim E."/>
            <person name="Taghavi S."/>
            <person name="Newman L."/>
            <person name="Vangronsveld J."/>
            <person name="van der Lelie D."/>
            <person name="Richardson P."/>
        </authorList>
    </citation>
    <scope>NUCLEOTIDE SEQUENCE [LARGE SCALE GENOMIC DNA]</scope>
    <source>
        <strain>568</strain>
    </source>
</reference>
<feature type="chain" id="PRO_0000343974" description="Cell division inhibitor SulA">
    <location>
        <begin position="1"/>
        <end position="168"/>
    </location>
</feature>
<feature type="region of interest" description="FtsZ binding" evidence="1">
    <location>
        <begin position="106"/>
        <end position="112"/>
    </location>
</feature>
<feature type="region of interest" description="Lon protease binding" evidence="1">
    <location>
        <begin position="161"/>
        <end position="168"/>
    </location>
</feature>
<feature type="site" description="Essential for degradation by Lon protease" evidence="1">
    <location>
        <position position="168"/>
    </location>
</feature>
<organism>
    <name type="scientific">Serratia proteamaculans (strain 568)</name>
    <dbReference type="NCBI Taxonomy" id="399741"/>
    <lineage>
        <taxon>Bacteria</taxon>
        <taxon>Pseudomonadati</taxon>
        <taxon>Pseudomonadota</taxon>
        <taxon>Gammaproteobacteria</taxon>
        <taxon>Enterobacterales</taxon>
        <taxon>Yersiniaceae</taxon>
        <taxon>Serratia</taxon>
    </lineage>
</organism>
<protein>
    <recommendedName>
        <fullName evidence="1">Cell division inhibitor SulA</fullName>
    </recommendedName>
</protein>
<evidence type="ECO:0000255" key="1">
    <source>
        <dbReference type="HAMAP-Rule" id="MF_01179"/>
    </source>
</evidence>
<accession>A8GCL9</accession>
<sequence>MRTQSLYNTHFSHTSFAVSNAAESTNDGKENGLISELVYNEHQPAVVQLLLPLLQQLGMQSRWLLWLTPQQKLSKLWLQQSGLPVGKVVQLSQINSLDTVEAMEKALLTGNYSVVLGWLPDLTEEDRLKLRRAAELGNAYGFIMRPQRDINPVHGHCSTLKIHSSLYH</sequence>
<comment type="function">
    <text evidence="1">Component of the SOS system and an inhibitor of cell division. Accumulation of SulA causes rapid cessation of cell division and the appearance of long, non-septate filaments. In the presence of GTP, binds a polymerization-competent form of FtsZ in a 1:1 ratio, thus inhibiting FtsZ polymerization and therefore preventing it from participating in the assembly of the Z ring. This mechanism prevents the premature segregation of damaged DNA to daughter cells during cell division.</text>
</comment>
<comment type="subunit">
    <text evidence="1">Interacts with FtsZ.</text>
</comment>
<comment type="induction">
    <text evidence="1">By DNA damage, as part of the SOS response.</text>
</comment>
<comment type="PTM">
    <text evidence="1">Is rapidly cleaved and degraded by the Lon protease once DNA damage is repaired.</text>
</comment>
<comment type="similarity">
    <text evidence="1">Belongs to the SulA family.</text>
</comment>